<keyword id="KW-0539">Nucleus</keyword>
<keyword id="KW-1185">Reference proteome</keyword>
<comment type="subcellular location">
    <subcellularLocation>
        <location evidence="1">Nucleus</location>
    </subcellularLocation>
</comment>
<comment type="similarity">
    <text evidence="1">Belongs to the BUD31 (G10) family.</text>
</comment>
<organism>
    <name type="scientific">Oryza sativa subsp. japonica</name>
    <name type="common">Rice</name>
    <dbReference type="NCBI Taxonomy" id="39947"/>
    <lineage>
        <taxon>Eukaryota</taxon>
        <taxon>Viridiplantae</taxon>
        <taxon>Streptophyta</taxon>
        <taxon>Embryophyta</taxon>
        <taxon>Tracheophyta</taxon>
        <taxon>Spermatophyta</taxon>
        <taxon>Magnoliopsida</taxon>
        <taxon>Liliopsida</taxon>
        <taxon>Poales</taxon>
        <taxon>Poaceae</taxon>
        <taxon>BOP clade</taxon>
        <taxon>Oryzoideae</taxon>
        <taxon>Oryzeae</taxon>
        <taxon>Oryzinae</taxon>
        <taxon>Oryza</taxon>
        <taxon>Oryza sativa</taxon>
    </lineage>
</organism>
<gene>
    <name type="ordered locus">Os05g0446300</name>
    <name type="ordered locus">LOC_Os05g37390</name>
    <name evidence="2" type="ORF">OsJ_18724</name>
    <name type="ORF">P0615D12.15</name>
</gene>
<protein>
    <recommendedName>
        <fullName>Protein BUD31 homolog 2</fullName>
    </recommendedName>
    <alternativeName>
        <fullName>Protein G10 homolog 2</fullName>
    </alternativeName>
</protein>
<reference key="1">
    <citation type="journal article" date="2005" name="Mol. Genet. Genomics">
        <title>A fine physical map of the rice chromosome 5.</title>
        <authorList>
            <person name="Cheng C.-H."/>
            <person name="Chung M.C."/>
            <person name="Liu S.-M."/>
            <person name="Chen S.-K."/>
            <person name="Kao F.Y."/>
            <person name="Lin S.-J."/>
            <person name="Hsiao S.-H."/>
            <person name="Tseng I.C."/>
            <person name="Hsing Y.-I.C."/>
            <person name="Wu H.-P."/>
            <person name="Chen C.-S."/>
            <person name="Shaw J.-F."/>
            <person name="Wu J."/>
            <person name="Matsumoto T."/>
            <person name="Sasaki T."/>
            <person name="Chen H.-C."/>
            <person name="Chow T.-Y."/>
        </authorList>
    </citation>
    <scope>NUCLEOTIDE SEQUENCE [LARGE SCALE GENOMIC DNA]</scope>
    <source>
        <strain>cv. Nipponbare</strain>
    </source>
</reference>
<reference key="2">
    <citation type="journal article" date="2005" name="Nature">
        <title>The map-based sequence of the rice genome.</title>
        <authorList>
            <consortium name="International rice genome sequencing project (IRGSP)"/>
        </authorList>
    </citation>
    <scope>NUCLEOTIDE SEQUENCE [LARGE SCALE GENOMIC DNA]</scope>
    <source>
        <strain>cv. Nipponbare</strain>
    </source>
</reference>
<reference key="3">
    <citation type="journal article" date="2008" name="Nucleic Acids Res.">
        <title>The rice annotation project database (RAP-DB): 2008 update.</title>
        <authorList>
            <consortium name="The rice annotation project (RAP)"/>
        </authorList>
    </citation>
    <scope>GENOME REANNOTATION</scope>
    <source>
        <strain>cv. Nipponbare</strain>
    </source>
</reference>
<reference key="4">
    <citation type="journal article" date="2013" name="Rice">
        <title>Improvement of the Oryza sativa Nipponbare reference genome using next generation sequence and optical map data.</title>
        <authorList>
            <person name="Kawahara Y."/>
            <person name="de la Bastide M."/>
            <person name="Hamilton J.P."/>
            <person name="Kanamori H."/>
            <person name="McCombie W.R."/>
            <person name="Ouyang S."/>
            <person name="Schwartz D.C."/>
            <person name="Tanaka T."/>
            <person name="Wu J."/>
            <person name="Zhou S."/>
            <person name="Childs K.L."/>
            <person name="Davidson R.M."/>
            <person name="Lin H."/>
            <person name="Quesada-Ocampo L."/>
            <person name="Vaillancourt B."/>
            <person name="Sakai H."/>
            <person name="Lee S.S."/>
            <person name="Kim J."/>
            <person name="Numa H."/>
            <person name="Itoh T."/>
            <person name="Buell C.R."/>
            <person name="Matsumoto T."/>
        </authorList>
    </citation>
    <scope>GENOME REANNOTATION</scope>
    <source>
        <strain>cv. Nipponbare</strain>
    </source>
</reference>
<reference key="5">
    <citation type="journal article" date="2005" name="PLoS Biol.">
        <title>The genomes of Oryza sativa: a history of duplications.</title>
        <authorList>
            <person name="Yu J."/>
            <person name="Wang J."/>
            <person name="Lin W."/>
            <person name="Li S."/>
            <person name="Li H."/>
            <person name="Zhou J."/>
            <person name="Ni P."/>
            <person name="Dong W."/>
            <person name="Hu S."/>
            <person name="Zeng C."/>
            <person name="Zhang J."/>
            <person name="Zhang Y."/>
            <person name="Li R."/>
            <person name="Xu Z."/>
            <person name="Li S."/>
            <person name="Li X."/>
            <person name="Zheng H."/>
            <person name="Cong L."/>
            <person name="Lin L."/>
            <person name="Yin J."/>
            <person name="Geng J."/>
            <person name="Li G."/>
            <person name="Shi J."/>
            <person name="Liu J."/>
            <person name="Lv H."/>
            <person name="Li J."/>
            <person name="Wang J."/>
            <person name="Deng Y."/>
            <person name="Ran L."/>
            <person name="Shi X."/>
            <person name="Wang X."/>
            <person name="Wu Q."/>
            <person name="Li C."/>
            <person name="Ren X."/>
            <person name="Wang J."/>
            <person name="Wang X."/>
            <person name="Li D."/>
            <person name="Liu D."/>
            <person name="Zhang X."/>
            <person name="Ji Z."/>
            <person name="Zhao W."/>
            <person name="Sun Y."/>
            <person name="Zhang Z."/>
            <person name="Bao J."/>
            <person name="Han Y."/>
            <person name="Dong L."/>
            <person name="Ji J."/>
            <person name="Chen P."/>
            <person name="Wu S."/>
            <person name="Liu J."/>
            <person name="Xiao Y."/>
            <person name="Bu D."/>
            <person name="Tan J."/>
            <person name="Yang L."/>
            <person name="Ye C."/>
            <person name="Zhang J."/>
            <person name="Xu J."/>
            <person name="Zhou Y."/>
            <person name="Yu Y."/>
            <person name="Zhang B."/>
            <person name="Zhuang S."/>
            <person name="Wei H."/>
            <person name="Liu B."/>
            <person name="Lei M."/>
            <person name="Yu H."/>
            <person name="Li Y."/>
            <person name="Xu H."/>
            <person name="Wei S."/>
            <person name="He X."/>
            <person name="Fang L."/>
            <person name="Zhang Z."/>
            <person name="Zhang Y."/>
            <person name="Huang X."/>
            <person name="Su Z."/>
            <person name="Tong W."/>
            <person name="Li J."/>
            <person name="Tong Z."/>
            <person name="Li S."/>
            <person name="Ye J."/>
            <person name="Wang L."/>
            <person name="Fang L."/>
            <person name="Lei T."/>
            <person name="Chen C.-S."/>
            <person name="Chen H.-C."/>
            <person name="Xu Z."/>
            <person name="Li H."/>
            <person name="Huang H."/>
            <person name="Zhang F."/>
            <person name="Xu H."/>
            <person name="Li N."/>
            <person name="Zhao C."/>
            <person name="Li S."/>
            <person name="Dong L."/>
            <person name="Huang Y."/>
            <person name="Li L."/>
            <person name="Xi Y."/>
            <person name="Qi Q."/>
            <person name="Li W."/>
            <person name="Zhang B."/>
            <person name="Hu W."/>
            <person name="Zhang Y."/>
            <person name="Tian X."/>
            <person name="Jiao Y."/>
            <person name="Liang X."/>
            <person name="Jin J."/>
            <person name="Gao L."/>
            <person name="Zheng W."/>
            <person name="Hao B."/>
            <person name="Liu S.-M."/>
            <person name="Wang W."/>
            <person name="Yuan L."/>
            <person name="Cao M."/>
            <person name="McDermott J."/>
            <person name="Samudrala R."/>
            <person name="Wang J."/>
            <person name="Wong G.K.-S."/>
            <person name="Yang H."/>
        </authorList>
    </citation>
    <scope>NUCLEOTIDE SEQUENCE [LARGE SCALE GENOMIC DNA]</scope>
    <source>
        <strain>cv. Nipponbare</strain>
    </source>
</reference>
<reference key="6">
    <citation type="journal article" date="2003" name="Science">
        <title>Collection, mapping, and annotation of over 28,000 cDNA clones from japonica rice.</title>
        <authorList>
            <consortium name="The rice full-length cDNA consortium"/>
        </authorList>
    </citation>
    <scope>NUCLEOTIDE SEQUENCE [LARGE SCALE MRNA]</scope>
    <source>
        <strain>cv. Nipponbare</strain>
    </source>
</reference>
<feature type="chain" id="PRO_0000226829" description="Protein BUD31 homolog 2">
    <location>
        <begin position="1"/>
        <end position="145"/>
    </location>
</feature>
<feature type="sequence conflict" description="In Ref. 6; AK066998." evidence="1" ref="6">
    <original>D</original>
    <variation>Y</variation>
    <location>
        <position position="62"/>
    </location>
</feature>
<sequence>MPKIKTSRVKYPEGWELIEPTLRDLEAKMREAENDPHDGKRKCEALWPIFRISHQKSRYIYDLYYRRKEISKELYEFCLDQGHADKNLIAKWKKPGYERLCCLRCIQTRDHNFATTCVCRVPKHLREEKVIECVHCGCRGCASGD</sequence>
<dbReference type="EMBL" id="AC137004">
    <property type="protein sequence ID" value="AAU44283.1"/>
    <property type="molecule type" value="Genomic_DNA"/>
</dbReference>
<dbReference type="EMBL" id="AP008211">
    <property type="protein sequence ID" value="BAF17601.1"/>
    <property type="molecule type" value="Genomic_DNA"/>
</dbReference>
<dbReference type="EMBL" id="AP014961">
    <property type="protein sequence ID" value="BAS94283.1"/>
    <property type="molecule type" value="Genomic_DNA"/>
</dbReference>
<dbReference type="EMBL" id="CM000142">
    <property type="protein sequence ID" value="EEE63899.1"/>
    <property type="molecule type" value="Genomic_DNA"/>
</dbReference>
<dbReference type="EMBL" id="AK066998">
    <property type="status" value="NOT_ANNOTATED_CDS"/>
    <property type="molecule type" value="mRNA"/>
</dbReference>
<dbReference type="RefSeq" id="XP_015637596.1">
    <property type="nucleotide sequence ID" value="XM_015782110.1"/>
</dbReference>
<dbReference type="RefSeq" id="XP_015637597.1">
    <property type="nucleotide sequence ID" value="XM_015782111.1"/>
</dbReference>
<dbReference type="SMR" id="Q65WT0"/>
<dbReference type="FunCoup" id="Q65WT0">
    <property type="interactions" value="2754"/>
</dbReference>
<dbReference type="STRING" id="39947.Q65WT0"/>
<dbReference type="PaxDb" id="39947-Q65WT0"/>
<dbReference type="EnsemblPlants" id="Os05t0446300-01">
    <property type="protein sequence ID" value="Os05t0446300-01"/>
    <property type="gene ID" value="Os05g0446300"/>
</dbReference>
<dbReference type="Gramene" id="Os05t0446300-01">
    <property type="protein sequence ID" value="Os05t0446300-01"/>
    <property type="gene ID" value="Os05g0446300"/>
</dbReference>
<dbReference type="KEGG" id="dosa:Os05g0446300"/>
<dbReference type="eggNOG" id="KOG3404">
    <property type="taxonomic scope" value="Eukaryota"/>
</dbReference>
<dbReference type="HOGENOM" id="CLU_087132_1_1_1"/>
<dbReference type="InParanoid" id="Q65WT0"/>
<dbReference type="OMA" id="FGTSCIC"/>
<dbReference type="OrthoDB" id="277109at2759"/>
<dbReference type="Proteomes" id="UP000000763">
    <property type="component" value="Chromosome 5"/>
</dbReference>
<dbReference type="Proteomes" id="UP000007752">
    <property type="component" value="Chromosome 5"/>
</dbReference>
<dbReference type="Proteomes" id="UP000059680">
    <property type="component" value="Chromosome 5"/>
</dbReference>
<dbReference type="GO" id="GO:0005681">
    <property type="term" value="C:spliceosomal complex"/>
    <property type="evidence" value="ECO:0000318"/>
    <property type="project" value="GO_Central"/>
</dbReference>
<dbReference type="GO" id="GO:0000398">
    <property type="term" value="P:mRNA splicing, via spliceosome"/>
    <property type="evidence" value="ECO:0000318"/>
    <property type="project" value="GO_Central"/>
</dbReference>
<dbReference type="InterPro" id="IPR001748">
    <property type="entry name" value="BUD31"/>
</dbReference>
<dbReference type="InterPro" id="IPR018230">
    <property type="entry name" value="BUD31/G10-rel_CS"/>
</dbReference>
<dbReference type="PANTHER" id="PTHR19411:SF0">
    <property type="entry name" value="PROTEIN BUD31 HOMOLOG"/>
    <property type="match status" value="1"/>
</dbReference>
<dbReference type="PANTHER" id="PTHR19411">
    <property type="entry name" value="PROTEIN BUD31-RELATED"/>
    <property type="match status" value="1"/>
</dbReference>
<dbReference type="Pfam" id="PF01125">
    <property type="entry name" value="BUD31"/>
    <property type="match status" value="1"/>
</dbReference>
<dbReference type="PRINTS" id="PR00322">
    <property type="entry name" value="G10"/>
</dbReference>
<dbReference type="PROSITE" id="PS00997">
    <property type="entry name" value="G10_1"/>
    <property type="match status" value="1"/>
</dbReference>
<dbReference type="PROSITE" id="PS00998">
    <property type="entry name" value="G10_2"/>
    <property type="match status" value="1"/>
</dbReference>
<evidence type="ECO:0000305" key="1"/>
<evidence type="ECO:0000312" key="2">
    <source>
        <dbReference type="EMBL" id="EEE63899.1"/>
    </source>
</evidence>
<accession>Q65WT0</accession>
<accession>Q0DHS2</accession>
<proteinExistence type="evidence at transcript level"/>
<name>BD31B_ORYSJ</name>